<feature type="chain" id="PRO_0000166697" description="Autonomous glycyl radical cofactor">
    <location>
        <begin position="1"/>
        <end position="127"/>
    </location>
</feature>
<feature type="domain" description="Glycine radical">
    <location>
        <begin position="5"/>
        <end position="127"/>
    </location>
</feature>
<feature type="modified residue" description="N6-acetyllysine" evidence="4">
    <location>
        <position position="48"/>
    </location>
</feature>
<feature type="modified residue" description="N6-acetyllysine" evidence="4">
    <location>
        <position position="88"/>
    </location>
</feature>
<feature type="modified residue" description="N6-acetyllysine" evidence="4">
    <location>
        <position position="92"/>
    </location>
</feature>
<feature type="modified residue" description="Glycine radical" evidence="1">
    <location>
        <position position="102"/>
    </location>
</feature>
<feature type="helix" evidence="6">
    <location>
        <begin position="80"/>
        <end position="88"/>
    </location>
</feature>
<feature type="helix" evidence="6">
    <location>
        <begin position="90"/>
        <end position="92"/>
    </location>
</feature>
<feature type="strand" evidence="6">
    <location>
        <begin position="97"/>
        <end position="99"/>
    </location>
</feature>
<feature type="strand" evidence="6">
    <location>
        <begin position="101"/>
        <end position="106"/>
    </location>
</feature>
<feature type="helix" evidence="6">
    <location>
        <begin position="107"/>
        <end position="109"/>
    </location>
</feature>
<feature type="helix" evidence="6">
    <location>
        <begin position="112"/>
        <end position="120"/>
    </location>
</feature>
<keyword id="KW-0002">3D-structure</keyword>
<keyword id="KW-0007">Acetylation</keyword>
<keyword id="KW-0903">Direct protein sequencing</keyword>
<keyword id="KW-0556">Organic radical</keyword>
<keyword id="KW-1185">Reference proteome</keyword>
<keyword id="KW-0346">Stress response</keyword>
<comment type="function">
    <text evidence="2">Acts as a radical domain for damaged PFL and possibly other radical proteins.</text>
</comment>
<comment type="interaction">
    <interactant intactId="EBI-561424">
        <id>P68066</id>
    </interactant>
    <interactant intactId="EBI-369251">
        <id>P0A9K9</id>
        <label>slyD</label>
    </interactant>
    <organismsDiffer>false</organismsDiffer>
    <experiments>3</experiments>
</comment>
<comment type="induction">
    <text evidence="3">By acid stress.</text>
</comment>
<comment type="disruption phenotype">
    <text evidence="5">Cells undergo an apoptotic-like death upon DNA damage characterized by membrane depolarization; further disruption of recA prevents membrane depolarization.</text>
</comment>
<organism>
    <name type="scientific">Escherichia coli (strain K12)</name>
    <dbReference type="NCBI Taxonomy" id="83333"/>
    <lineage>
        <taxon>Bacteria</taxon>
        <taxon>Pseudomonadati</taxon>
        <taxon>Pseudomonadota</taxon>
        <taxon>Gammaproteobacteria</taxon>
        <taxon>Enterobacterales</taxon>
        <taxon>Enterobacteriaceae</taxon>
        <taxon>Escherichia</taxon>
    </lineage>
</organism>
<proteinExistence type="evidence at protein level"/>
<evidence type="ECO:0000250" key="1"/>
<evidence type="ECO:0000269" key="2">
    <source>
    </source>
</evidence>
<evidence type="ECO:0000269" key="3">
    <source>
    </source>
</evidence>
<evidence type="ECO:0000269" key="4">
    <source>
    </source>
</evidence>
<evidence type="ECO:0000269" key="5">
    <source>
    </source>
</evidence>
<evidence type="ECO:0007829" key="6">
    <source>
        <dbReference type="PDB" id="6OWR"/>
    </source>
</evidence>
<protein>
    <recommendedName>
        <fullName>Autonomous glycyl radical cofactor</fullName>
    </recommendedName>
</protein>
<sequence length="127" mass="14284">MITGIQITKAANDDLLNSFWLLDSEKGEARCIVAKAGYAEDEVVAVSKLGDIEYREVPVEVKPEVRVEGGQHLNVNVLRRETLEDAVKHPEKYPQLTIRVSGYAVRFNSLTPEQQRDVIARTFTESL</sequence>
<reference key="1">
    <citation type="book" date="1993" name="The translational apparatus">
        <title>Non-ribosomal proteins affecting the assembly of ribosomes in Escherichia coli.</title>
        <editorList>
            <person name="Nierhaus K.H."/>
        </editorList>
        <authorList>
            <person name="Nashimoto H."/>
        </authorList>
    </citation>
    <scope>NUCLEOTIDE SEQUENCE [GENOMIC DNA]</scope>
    <source>
        <strain>K12</strain>
    </source>
</reference>
<reference key="2">
    <citation type="submission" date="1995-09" db="EMBL/GenBank/DDBJ databases">
        <authorList>
            <person name="Nashimoto H."/>
            <person name="Saito N."/>
        </authorList>
    </citation>
    <scope>NUCLEOTIDE SEQUENCE [GENOMIC DNA]</scope>
    <source>
        <strain>K12</strain>
    </source>
</reference>
<reference key="3">
    <citation type="journal article" date="1997" name="DNA Res.">
        <title>Construction of a contiguous 874-kb sequence of the Escherichia coli-K12 genome corresponding to 50.0-68.8 min on the linkage map and analysis of its sequence features.</title>
        <authorList>
            <person name="Yamamoto Y."/>
            <person name="Aiba H."/>
            <person name="Baba T."/>
            <person name="Hayashi K."/>
            <person name="Inada T."/>
            <person name="Isono K."/>
            <person name="Itoh T."/>
            <person name="Kimura S."/>
            <person name="Kitagawa M."/>
            <person name="Makino K."/>
            <person name="Miki T."/>
            <person name="Mitsuhashi N."/>
            <person name="Mizobuchi K."/>
            <person name="Mori H."/>
            <person name="Nakade S."/>
            <person name="Nakamura Y."/>
            <person name="Nashimoto H."/>
            <person name="Oshima T."/>
            <person name="Oyama S."/>
            <person name="Saito N."/>
            <person name="Sampei G."/>
            <person name="Satoh Y."/>
            <person name="Sivasundaram S."/>
            <person name="Tagami H."/>
            <person name="Takahashi H."/>
            <person name="Takeda J."/>
            <person name="Takemoto K."/>
            <person name="Uehara K."/>
            <person name="Wada C."/>
            <person name="Yamagata S."/>
            <person name="Horiuchi T."/>
        </authorList>
    </citation>
    <scope>NUCLEOTIDE SEQUENCE [LARGE SCALE GENOMIC DNA]</scope>
    <source>
        <strain>K12 / W3110 / ATCC 27325 / DSM 5911</strain>
    </source>
</reference>
<reference key="4">
    <citation type="journal article" date="1997" name="Science">
        <title>The complete genome sequence of Escherichia coli K-12.</title>
        <authorList>
            <person name="Blattner F.R."/>
            <person name="Plunkett G. III"/>
            <person name="Bloch C.A."/>
            <person name="Perna N.T."/>
            <person name="Burland V."/>
            <person name="Riley M."/>
            <person name="Collado-Vides J."/>
            <person name="Glasner J.D."/>
            <person name="Rode C.K."/>
            <person name="Mayhew G.F."/>
            <person name="Gregor J."/>
            <person name="Davis N.W."/>
            <person name="Kirkpatrick H.A."/>
            <person name="Goeden M.A."/>
            <person name="Rose D.J."/>
            <person name="Mau B."/>
            <person name="Shao Y."/>
        </authorList>
    </citation>
    <scope>NUCLEOTIDE SEQUENCE [LARGE SCALE GENOMIC DNA]</scope>
    <source>
        <strain>K12 / MG1655 / ATCC 47076</strain>
    </source>
</reference>
<reference key="5">
    <citation type="journal article" date="2006" name="Mol. Syst. Biol.">
        <title>Highly accurate genome sequences of Escherichia coli K-12 strains MG1655 and W3110.</title>
        <authorList>
            <person name="Hayashi K."/>
            <person name="Morooka N."/>
            <person name="Yamamoto Y."/>
            <person name="Fujita K."/>
            <person name="Isono K."/>
            <person name="Choi S."/>
            <person name="Ohtsubo E."/>
            <person name="Baba T."/>
            <person name="Wanner B.L."/>
            <person name="Mori H."/>
            <person name="Horiuchi T."/>
        </authorList>
    </citation>
    <scope>NUCLEOTIDE SEQUENCE [LARGE SCALE GENOMIC DNA]</scope>
    <source>
        <strain>K12 / W3110 / ATCC 27325 / DSM 5911</strain>
    </source>
</reference>
<reference key="6">
    <citation type="journal article" date="1988" name="J. Biol. Chem.">
        <title>Sequence analysis, expression, and conservation of Escherichia coli uracil DNA glycosylase and its gene (ung).</title>
        <authorList>
            <person name="Varshney U."/>
            <person name="Hutcheon T."/>
            <person name="de Sande J.H."/>
        </authorList>
    </citation>
    <scope>NUCLEOTIDE SEQUENCE [GENOMIC DNA] OF 1-76</scope>
</reference>
<reference key="7">
    <citation type="journal article" date="1998" name="FEMS Microbiol. Lett.">
        <title>Small genes/gene-products in Escherichia coli K-12.</title>
        <authorList>
            <person name="Wasinger V.C."/>
            <person name="Humphery-Smith I."/>
        </authorList>
    </citation>
    <scope>PROTEIN SEQUENCE OF 1-10</scope>
    <source>
        <strain>K12</strain>
    </source>
</reference>
<reference key="8">
    <citation type="journal article" date="1998" name="J. Mol. Biol.">
        <title>Protein identification with N and C-terminal sequence tags in proteome projects.</title>
        <authorList>
            <person name="Wilkins M.R."/>
            <person name="Gasteiger E."/>
            <person name="Tonella L."/>
            <person name="Ou K."/>
            <person name="Tyler M."/>
            <person name="Sanchez J.-C."/>
            <person name="Gooley A.A."/>
            <person name="Walsh B.J."/>
            <person name="Bairoch A."/>
            <person name="Appel R.D."/>
            <person name="Williams K.L."/>
            <person name="Hochstrasser D.F."/>
        </authorList>
    </citation>
    <scope>PROTEIN SEQUENCE OF 1-4</scope>
    <source>
        <strain>K12 / W3110 / ATCC 27325 / DSM 5911</strain>
    </source>
</reference>
<reference key="9">
    <citation type="journal article" date="1994" name="Nucleic Acids Res.">
        <title>Intrinsic and extrinsic approaches for detecting genes in a bacterial genome.</title>
        <authorList>
            <person name="Borodovsky M."/>
            <person name="Rudd K.E."/>
            <person name="Koonin E.V."/>
        </authorList>
    </citation>
    <scope>IDENTIFICATION</scope>
</reference>
<reference key="10">
    <citation type="journal article" date="1999" name="Electrophoresis">
        <title>Enrichment of low abundance proteins of Escherichia coli by hydroxyapatite chromatography.</title>
        <authorList>
            <person name="Fountoulakis M."/>
            <person name="Takacs M.-F."/>
            <person name="Berndt P."/>
            <person name="Langen H."/>
            <person name="Takacs B."/>
        </authorList>
    </citation>
    <scope>IDENTIFICATION BY MASS SPECTROMETRY</scope>
    <source>
        <strain>B / BL21</strain>
    </source>
</reference>
<reference key="11">
    <citation type="journal article" date="2002" name="Microbiology">
        <title>Expression of the Escherichia coli yfiD gene responds to intracellular pH and reduces the accumulation of acidic metabolic end products.</title>
        <authorList>
            <person name="Wyborn N.R."/>
            <person name="Messenger S.L."/>
            <person name="Henderson R.A."/>
            <person name="Sawers G."/>
            <person name="Roberts R.E."/>
            <person name="Attwood M.M."/>
            <person name="Green J."/>
        </authorList>
    </citation>
    <scope>INDUCTION</scope>
</reference>
<reference key="12">
    <citation type="journal article" date="2001" name="Biochem. Biophys. Res. Commun.">
        <title>YfiD of Escherichia coli and Y06I of bacteriophage T4 as autonomous glycyl radical cofactors reconstituting the catalytic center of oxygen-fragmented pyruvate formate-lyase.</title>
        <authorList>
            <person name="Wagner A.F.V."/>
            <person name="Schultz S."/>
            <person name="Bomke J."/>
            <person name="Pils T."/>
            <person name="Lehmann W.D."/>
            <person name="Knappe J."/>
        </authorList>
    </citation>
    <scope>FUNCTION</scope>
</reference>
<reference key="13">
    <citation type="journal article" date="2009" name="Mol. Cell. Proteomics">
        <title>Lysine acetylation is a highly abundant and evolutionarily conserved modification in Escherichia coli.</title>
        <authorList>
            <person name="Zhang J."/>
            <person name="Sprung R."/>
            <person name="Pei J."/>
            <person name="Tan X."/>
            <person name="Kim S."/>
            <person name="Zhu H."/>
            <person name="Liu C.F."/>
            <person name="Grishin N.V."/>
            <person name="Zhao Y."/>
        </authorList>
    </citation>
    <scope>ACETYLATION [LARGE SCALE ANALYSIS] AT LYS-48; LYS-88 AND LYS-92</scope>
    <scope>IDENTIFICATION BY MASS SPECTROMETRY</scope>
    <source>
        <strain>K12 / JW1106</strain>
        <strain>K12 / MG1655 / ATCC 47076</strain>
    </source>
</reference>
<reference key="14">
    <citation type="journal article" date="2012" name="PLoS Biol.">
        <title>Two programmed cell death systems in Escherichia coli: an apoptotic-like death is inhibited by the mazEF-mediated death pathway.</title>
        <authorList>
            <person name="Erental A."/>
            <person name="Sharon I."/>
            <person name="Engelberg-Kulka H."/>
        </authorList>
    </citation>
    <scope>DISRUPTION PHENOTYPE</scope>
    <source>
        <strain>K12 / MC4100 / ATCC 35695 / DSM 6574</strain>
    </source>
</reference>
<dbReference type="EMBL" id="D13169">
    <property type="status" value="NOT_ANNOTATED_CDS"/>
    <property type="molecule type" value="Genomic_DNA"/>
</dbReference>
<dbReference type="EMBL" id="D64044">
    <property type="status" value="NOT_ANNOTATED_CDS"/>
    <property type="molecule type" value="Genomic_DNA"/>
</dbReference>
<dbReference type="EMBL" id="U00096">
    <property type="protein sequence ID" value="AAC75632.1"/>
    <property type="molecule type" value="Genomic_DNA"/>
</dbReference>
<dbReference type="EMBL" id="AP009048">
    <property type="protein sequence ID" value="BAA16465.1"/>
    <property type="molecule type" value="Genomic_DNA"/>
</dbReference>
<dbReference type="EMBL" id="J03725">
    <property type="status" value="NOT_ANNOTATED_CDS"/>
    <property type="molecule type" value="Genomic_DNA"/>
</dbReference>
<dbReference type="PIR" id="B65036">
    <property type="entry name" value="B65036"/>
</dbReference>
<dbReference type="RefSeq" id="NP_417074.1">
    <property type="nucleotide sequence ID" value="NC_000913.3"/>
</dbReference>
<dbReference type="RefSeq" id="WP_000627807.1">
    <property type="nucleotide sequence ID" value="NZ_STEB01000011.1"/>
</dbReference>
<dbReference type="PDB" id="6OWR">
    <property type="method" value="NMR"/>
    <property type="chains" value="A=1-127"/>
</dbReference>
<dbReference type="PDBsum" id="6OWR"/>
<dbReference type="SMR" id="P68066"/>
<dbReference type="BioGRID" id="4263475">
    <property type="interactions" value="11"/>
</dbReference>
<dbReference type="BioGRID" id="851405">
    <property type="interactions" value="1"/>
</dbReference>
<dbReference type="DIP" id="DIP-47913N"/>
<dbReference type="FunCoup" id="P68066">
    <property type="interactions" value="335"/>
</dbReference>
<dbReference type="IntAct" id="P68066">
    <property type="interactions" value="18"/>
</dbReference>
<dbReference type="STRING" id="511145.b2579"/>
<dbReference type="iPTMnet" id="P68066"/>
<dbReference type="jPOST" id="P68066"/>
<dbReference type="PaxDb" id="511145-b2579"/>
<dbReference type="EnsemblBacteria" id="AAC75632">
    <property type="protein sequence ID" value="AAC75632"/>
    <property type="gene ID" value="b2579"/>
</dbReference>
<dbReference type="GeneID" id="93774507"/>
<dbReference type="GeneID" id="947068"/>
<dbReference type="KEGG" id="ecj:JW2563"/>
<dbReference type="KEGG" id="eco:b2579"/>
<dbReference type="KEGG" id="ecoc:C3026_14290"/>
<dbReference type="PATRIC" id="fig|1411691.4.peg.4155"/>
<dbReference type="EchoBASE" id="EB1732"/>
<dbReference type="eggNOG" id="COG3445">
    <property type="taxonomic scope" value="Bacteria"/>
</dbReference>
<dbReference type="HOGENOM" id="CLU_133780_0_0_6"/>
<dbReference type="InParanoid" id="P68066"/>
<dbReference type="OMA" id="QFEYREL"/>
<dbReference type="OrthoDB" id="9803969at2"/>
<dbReference type="PhylomeDB" id="P68066"/>
<dbReference type="BioCyc" id="EcoCyc:EG11784-MONOMER"/>
<dbReference type="PRO" id="PR:P68066"/>
<dbReference type="Proteomes" id="UP000000625">
    <property type="component" value="Chromosome"/>
</dbReference>
<dbReference type="GO" id="GO:0005737">
    <property type="term" value="C:cytoplasm"/>
    <property type="evidence" value="ECO:0007005"/>
    <property type="project" value="UniProtKB"/>
</dbReference>
<dbReference type="GO" id="GO:0005829">
    <property type="term" value="C:cytosol"/>
    <property type="evidence" value="ECO:0000314"/>
    <property type="project" value="EcoCyc"/>
</dbReference>
<dbReference type="GO" id="GO:0008861">
    <property type="term" value="F:formate C-acetyltransferase activity"/>
    <property type="evidence" value="ECO:0000269"/>
    <property type="project" value="EcoCyc"/>
</dbReference>
<dbReference type="GO" id="GO:0006950">
    <property type="term" value="P:response to stress"/>
    <property type="evidence" value="ECO:0000315"/>
    <property type="project" value="EcoCyc"/>
</dbReference>
<dbReference type="FunFam" id="3.20.70.20:FF:000002">
    <property type="entry name" value="Autonomous glycyl radical cofactor"/>
    <property type="match status" value="1"/>
</dbReference>
<dbReference type="Gene3D" id="3.20.70.20">
    <property type="match status" value="1"/>
</dbReference>
<dbReference type="HAMAP" id="MF_00806">
    <property type="entry name" value="GrcA"/>
    <property type="match status" value="1"/>
</dbReference>
<dbReference type="InterPro" id="IPR050244">
    <property type="entry name" value="Auton_GlycylRad_Cofactor"/>
</dbReference>
<dbReference type="InterPro" id="IPR019777">
    <property type="entry name" value="Form_AcTrfase_GR_CS"/>
</dbReference>
<dbReference type="InterPro" id="IPR001150">
    <property type="entry name" value="Gly_radical"/>
</dbReference>
<dbReference type="InterPro" id="IPR011140">
    <property type="entry name" value="Glycyl_radical_cofactor_GrcA"/>
</dbReference>
<dbReference type="NCBIfam" id="TIGR04365">
    <property type="entry name" value="spare_glycyl"/>
    <property type="match status" value="1"/>
</dbReference>
<dbReference type="PANTHER" id="PTHR30191">
    <property type="entry name" value="FORMATE ACETYLTRANSFERASE"/>
    <property type="match status" value="1"/>
</dbReference>
<dbReference type="PANTHER" id="PTHR30191:SF0">
    <property type="entry name" value="FORMATE ACETYLTRANSFERASE 1"/>
    <property type="match status" value="1"/>
</dbReference>
<dbReference type="Pfam" id="PF01228">
    <property type="entry name" value="Gly_radical"/>
    <property type="match status" value="1"/>
</dbReference>
<dbReference type="PIRSF" id="PIRSF000378">
    <property type="entry name" value="Gly_radicl_yfiD"/>
    <property type="match status" value="1"/>
</dbReference>
<dbReference type="SUPFAM" id="SSF51998">
    <property type="entry name" value="PFL-like glycyl radical enzymes"/>
    <property type="match status" value="1"/>
</dbReference>
<dbReference type="PROSITE" id="PS00850">
    <property type="entry name" value="GLY_RADICAL_1"/>
    <property type="match status" value="1"/>
</dbReference>
<dbReference type="PROSITE" id="PS51149">
    <property type="entry name" value="GLY_RADICAL_2"/>
    <property type="match status" value="1"/>
</dbReference>
<gene>
    <name type="primary">grcA</name>
    <name type="synonym">yfiD</name>
    <name type="ordered locus">b2579</name>
    <name type="ordered locus">JW2563</name>
</gene>
<accession>P68066</accession>
<accession>P33633</accession>
<name>GRCA_ECOLI</name>